<protein>
    <recommendedName>
        <fullName evidence="1">Recombination-associated protein RdgC</fullName>
    </recommendedName>
</protein>
<sequence>MWFKNLQIYRLPAPWAITAEQLETDLAPHAFLPCSSLDMQSQGWVSPRENGALVYTLNKQIMLLLGTEKKLLPTTVINQVTKIKAAEIEEQQGFKPGRKQMKELKEDVTDELLPRAFSIWRQTWVWIDPVNGWLVVDAGSPAKADEVIKLLIKSVDKLPLDTLHVVQSPVAAMTQWLLTDEAPSGFTVDQDTELRSTGEGKATVRYVRHTLEAEDVQRHIAAGKQCTRLAMSWADKISFVLTESLAIKRVAPLDVIKENTDTTAQNDDERFDSDVMLMTGELSRMLADLVQALGGEQAKK</sequence>
<comment type="function">
    <text evidence="1">May be involved in recombination.</text>
</comment>
<comment type="subcellular location">
    <subcellularLocation>
        <location evidence="1">Cytoplasm</location>
        <location evidence="1">Nucleoid</location>
    </subcellularLocation>
</comment>
<comment type="similarity">
    <text evidence="1">Belongs to the RdgC family.</text>
</comment>
<keyword id="KW-0963">Cytoplasm</keyword>
<keyword id="KW-0233">DNA recombination</keyword>
<keyword id="KW-1185">Reference proteome</keyword>
<dbReference type="EMBL" id="CU207211">
    <property type="protein sequence ID" value="CAL61253.2"/>
    <property type="molecule type" value="Genomic_DNA"/>
</dbReference>
<dbReference type="SMR" id="A4G416"/>
<dbReference type="STRING" id="204773.HEAR1074"/>
<dbReference type="KEGG" id="har:HEAR1074"/>
<dbReference type="eggNOG" id="COG2974">
    <property type="taxonomic scope" value="Bacteria"/>
</dbReference>
<dbReference type="HOGENOM" id="CLU_052038_1_1_4"/>
<dbReference type="OrthoDB" id="5290530at2"/>
<dbReference type="Proteomes" id="UP000006697">
    <property type="component" value="Chromosome"/>
</dbReference>
<dbReference type="GO" id="GO:0043590">
    <property type="term" value="C:bacterial nucleoid"/>
    <property type="evidence" value="ECO:0007669"/>
    <property type="project" value="TreeGrafter"/>
</dbReference>
<dbReference type="GO" id="GO:0005737">
    <property type="term" value="C:cytoplasm"/>
    <property type="evidence" value="ECO:0007669"/>
    <property type="project" value="UniProtKB-UniRule"/>
</dbReference>
<dbReference type="GO" id="GO:0003690">
    <property type="term" value="F:double-stranded DNA binding"/>
    <property type="evidence" value="ECO:0007669"/>
    <property type="project" value="TreeGrafter"/>
</dbReference>
<dbReference type="GO" id="GO:0006310">
    <property type="term" value="P:DNA recombination"/>
    <property type="evidence" value="ECO:0007669"/>
    <property type="project" value="UniProtKB-UniRule"/>
</dbReference>
<dbReference type="GO" id="GO:0000018">
    <property type="term" value="P:regulation of DNA recombination"/>
    <property type="evidence" value="ECO:0007669"/>
    <property type="project" value="TreeGrafter"/>
</dbReference>
<dbReference type="HAMAP" id="MF_00194">
    <property type="entry name" value="RdgC"/>
    <property type="match status" value="1"/>
</dbReference>
<dbReference type="InterPro" id="IPR007476">
    <property type="entry name" value="RdgC"/>
</dbReference>
<dbReference type="NCBIfam" id="NF001463">
    <property type="entry name" value="PRK00321.1-4"/>
    <property type="match status" value="1"/>
</dbReference>
<dbReference type="NCBIfam" id="NF001464">
    <property type="entry name" value="PRK00321.1-5"/>
    <property type="match status" value="1"/>
</dbReference>
<dbReference type="PANTHER" id="PTHR38103">
    <property type="entry name" value="RECOMBINATION-ASSOCIATED PROTEIN RDGC"/>
    <property type="match status" value="1"/>
</dbReference>
<dbReference type="PANTHER" id="PTHR38103:SF1">
    <property type="entry name" value="RECOMBINATION-ASSOCIATED PROTEIN RDGC"/>
    <property type="match status" value="1"/>
</dbReference>
<dbReference type="Pfam" id="PF04381">
    <property type="entry name" value="RdgC"/>
    <property type="match status" value="1"/>
</dbReference>
<feature type="chain" id="PRO_1000099064" description="Recombination-associated protein RdgC">
    <location>
        <begin position="1"/>
        <end position="300"/>
    </location>
</feature>
<reference key="1">
    <citation type="journal article" date="2007" name="PLoS Genet.">
        <title>A tale of two oxidation states: bacterial colonization of arsenic-rich environments.</title>
        <authorList>
            <person name="Muller D."/>
            <person name="Medigue C."/>
            <person name="Koechler S."/>
            <person name="Barbe V."/>
            <person name="Barakat M."/>
            <person name="Talla E."/>
            <person name="Bonnefoy V."/>
            <person name="Krin E."/>
            <person name="Arsene-Ploetze F."/>
            <person name="Carapito C."/>
            <person name="Chandler M."/>
            <person name="Cournoyer B."/>
            <person name="Cruveiller S."/>
            <person name="Dossat C."/>
            <person name="Duval S."/>
            <person name="Heymann M."/>
            <person name="Leize E."/>
            <person name="Lieutaud A."/>
            <person name="Lievremont D."/>
            <person name="Makita Y."/>
            <person name="Mangenot S."/>
            <person name="Nitschke W."/>
            <person name="Ortet P."/>
            <person name="Perdrial N."/>
            <person name="Schoepp B."/>
            <person name="Siguier P."/>
            <person name="Simeonova D.D."/>
            <person name="Rouy Z."/>
            <person name="Segurens B."/>
            <person name="Turlin E."/>
            <person name="Vallenet D."/>
            <person name="van Dorsselaer A."/>
            <person name="Weiss S."/>
            <person name="Weissenbach J."/>
            <person name="Lett M.-C."/>
            <person name="Danchin A."/>
            <person name="Bertin P.N."/>
        </authorList>
    </citation>
    <scope>NUCLEOTIDE SEQUENCE [LARGE SCALE GENOMIC DNA]</scope>
    <source>
        <strain>ULPAs1</strain>
    </source>
</reference>
<gene>
    <name evidence="1" type="primary">rdgC</name>
    <name type="ordered locus">HEAR1074</name>
</gene>
<proteinExistence type="inferred from homology"/>
<evidence type="ECO:0000255" key="1">
    <source>
        <dbReference type="HAMAP-Rule" id="MF_00194"/>
    </source>
</evidence>
<accession>A4G416</accession>
<organism>
    <name type="scientific">Herminiimonas arsenicoxydans</name>
    <dbReference type="NCBI Taxonomy" id="204773"/>
    <lineage>
        <taxon>Bacteria</taxon>
        <taxon>Pseudomonadati</taxon>
        <taxon>Pseudomonadota</taxon>
        <taxon>Betaproteobacteria</taxon>
        <taxon>Burkholderiales</taxon>
        <taxon>Oxalobacteraceae</taxon>
        <taxon>Herminiimonas</taxon>
    </lineage>
</organism>
<name>RDGC_HERAR</name>